<evidence type="ECO:0000250" key="1"/>
<evidence type="ECO:0000255" key="2"/>
<evidence type="ECO:0000255" key="3">
    <source>
        <dbReference type="PROSITE-ProRule" id="PRU00861"/>
    </source>
</evidence>
<protein>
    <recommendedName>
        <fullName>HSF-like protein</fullName>
        <shortName>HLP</shortName>
    </recommendedName>
</protein>
<proteinExistence type="evidence at transcript level"/>
<comment type="function">
    <text>May not have antihemorrhagic activity.</text>
</comment>
<comment type="subunit">
    <text evidence="1">Homodimer.</text>
</comment>
<comment type="subcellular location">
    <subcellularLocation>
        <location evidence="1">Secreted</location>
    </subcellularLocation>
</comment>
<comment type="tissue specificity">
    <text>Expressed by the liver.</text>
</comment>
<comment type="similarity">
    <text evidence="3">Belongs to the fetuin family.</text>
</comment>
<organism>
    <name type="scientific">Protobothrops flavoviridis</name>
    <name type="common">Habu</name>
    <name type="synonym">Trimeresurus flavoviridis</name>
    <dbReference type="NCBI Taxonomy" id="88087"/>
    <lineage>
        <taxon>Eukaryota</taxon>
        <taxon>Metazoa</taxon>
        <taxon>Chordata</taxon>
        <taxon>Craniata</taxon>
        <taxon>Vertebrata</taxon>
        <taxon>Euteleostomi</taxon>
        <taxon>Lepidosauria</taxon>
        <taxon>Squamata</taxon>
        <taxon>Bifurcata</taxon>
        <taxon>Unidentata</taxon>
        <taxon>Episquamata</taxon>
        <taxon>Toxicofera</taxon>
        <taxon>Serpentes</taxon>
        <taxon>Colubroidea</taxon>
        <taxon>Viperidae</taxon>
        <taxon>Crotalinae</taxon>
        <taxon>Protobothrops</taxon>
    </lineage>
</organism>
<reference key="1">
    <citation type="submission" date="2005-01" db="EMBL/GenBank/DDBJ databases">
        <title>HSF-like protein (HLP), a fetuin family protein without antihemorrhagic activity in Habu snake serum.</title>
        <authorList>
            <person name="Hori S."/>
            <person name="Aoki N."/>
            <person name="Deshimaru M."/>
            <person name="Terada S."/>
        </authorList>
    </citation>
    <scope>NUCLEOTIDE SEQUENCE [MRNA]</scope>
    <source>
        <tissue>Liver</tissue>
    </source>
</reference>
<sequence length="324" mass="36528">MNSLVALVLLGQIIGSTVSFQLGPNMDCNTKGTKDWADIGVHYINEHKLHGYKQALNVIKIFRLLPSDGRSVIFHFNLNLLETECHVLDSTPVENCTVRPQHNHAVEMDCNVRIIHDITTFEDEVFVKCSSTPGSVENILRDCPKCPILLSPNDPHVVDSVEYVLNKHNEKLSGHIYEVLEISRGQHKYEPEAYYLEFVIVEINCTAQEAHDDYHQCHPYTAGEDHIAFCRSTVFRSHASLEKPKDEKFESDCVILDVKEGHAHSHLIEHHVGKYSTSPGYNSTDECVVECPVAFVNKEVPTDISDHNTPPVKGCPGRVLHFQL</sequence>
<feature type="signal peptide" evidence="2">
    <location>
        <begin position="1"/>
        <end position="19"/>
    </location>
</feature>
<feature type="chain" id="PRO_5000052208" description="HSF-like protein">
    <location>
        <begin position="20"/>
        <end position="324"/>
    </location>
</feature>
<feature type="domain" description="Cystatin fetuin-A-type 1" evidence="3">
    <location>
        <begin position="21"/>
        <end position="130"/>
    </location>
</feature>
<feature type="domain" description="Cystatin fetuin-A-type 2" evidence="3">
    <location>
        <begin position="141"/>
        <end position="254"/>
    </location>
</feature>
<feature type="glycosylation site" description="N-linked (GlcNAc...) asparagine" evidence="2">
    <location>
        <position position="95"/>
    </location>
</feature>
<feature type="glycosylation site" description="N-linked (GlcNAc...) asparagine" evidence="2">
    <location>
        <position position="204"/>
    </location>
</feature>
<feature type="glycosylation site" description="N-linked (GlcNAc...) asparagine" evidence="2">
    <location>
        <position position="282"/>
    </location>
</feature>
<feature type="disulfide bond" evidence="3">
    <location>
        <begin position="28"/>
        <end position="315"/>
    </location>
</feature>
<feature type="disulfide bond" evidence="3">
    <location>
        <begin position="85"/>
        <end position="96"/>
    </location>
</feature>
<feature type="disulfide bond" evidence="3">
    <location>
        <begin position="110"/>
        <end position="129"/>
    </location>
</feature>
<feature type="disulfide bond" evidence="3">
    <location>
        <begin position="143"/>
        <end position="146"/>
    </location>
</feature>
<feature type="disulfide bond" evidence="3">
    <location>
        <begin position="205"/>
        <end position="217"/>
    </location>
</feature>
<feature type="disulfide bond" evidence="3">
    <location>
        <begin position="230"/>
        <end position="253"/>
    </location>
</feature>
<name>FETHP_PROFL</name>
<accession>Q5KQS5</accession>
<dbReference type="EMBL" id="AB200168">
    <property type="protein sequence ID" value="BAD88535.1"/>
    <property type="molecule type" value="mRNA"/>
</dbReference>
<dbReference type="SMR" id="Q5KQS5"/>
<dbReference type="MEROPS" id="I25.042"/>
<dbReference type="GO" id="GO:0072562">
    <property type="term" value="C:blood microparticle"/>
    <property type="evidence" value="ECO:0007669"/>
    <property type="project" value="TreeGrafter"/>
</dbReference>
<dbReference type="GO" id="GO:0031012">
    <property type="term" value="C:extracellular matrix"/>
    <property type="evidence" value="ECO:0007669"/>
    <property type="project" value="TreeGrafter"/>
</dbReference>
<dbReference type="GO" id="GO:0004869">
    <property type="term" value="F:cysteine-type endopeptidase inhibitor activity"/>
    <property type="evidence" value="ECO:0007669"/>
    <property type="project" value="InterPro"/>
</dbReference>
<dbReference type="CDD" id="cd00042">
    <property type="entry name" value="CY"/>
    <property type="match status" value="1"/>
</dbReference>
<dbReference type="FunFam" id="3.10.450.10:FF:000002">
    <property type="entry name" value="Kininogen 1"/>
    <property type="match status" value="1"/>
</dbReference>
<dbReference type="Gene3D" id="3.10.450.10">
    <property type="match status" value="2"/>
</dbReference>
<dbReference type="InterPro" id="IPR000010">
    <property type="entry name" value="Cystatin_dom"/>
</dbReference>
<dbReference type="InterPro" id="IPR025760">
    <property type="entry name" value="Cystatin_Fetuin_A"/>
</dbReference>
<dbReference type="InterPro" id="IPR046350">
    <property type="entry name" value="Cystatin_sf"/>
</dbReference>
<dbReference type="InterPro" id="IPR050735">
    <property type="entry name" value="Kininogen_Fetuin_HRG"/>
</dbReference>
<dbReference type="InterPro" id="IPR001363">
    <property type="entry name" value="Prot_inh_fetuin_CS"/>
</dbReference>
<dbReference type="PANTHER" id="PTHR13814:SF6">
    <property type="entry name" value="ALPHA-2-HS-GLYCOPROTEIN"/>
    <property type="match status" value="1"/>
</dbReference>
<dbReference type="PANTHER" id="PTHR13814">
    <property type="entry name" value="FETUIN"/>
    <property type="match status" value="1"/>
</dbReference>
<dbReference type="Pfam" id="PF00031">
    <property type="entry name" value="Cystatin"/>
    <property type="match status" value="1"/>
</dbReference>
<dbReference type="SMART" id="SM00043">
    <property type="entry name" value="CY"/>
    <property type="match status" value="2"/>
</dbReference>
<dbReference type="SUPFAM" id="SSF54403">
    <property type="entry name" value="Cystatin/monellin"/>
    <property type="match status" value="2"/>
</dbReference>
<dbReference type="PROSITE" id="PS51529">
    <property type="entry name" value="CYSTATIN_FETUIN_A"/>
    <property type="match status" value="2"/>
</dbReference>
<dbReference type="PROSITE" id="PS01255">
    <property type="entry name" value="FETUIN_2"/>
    <property type="match status" value="1"/>
</dbReference>
<keyword id="KW-1015">Disulfide bond</keyword>
<keyword id="KW-0325">Glycoprotein</keyword>
<keyword id="KW-0677">Repeat</keyword>
<keyword id="KW-0964">Secreted</keyword>
<keyword id="KW-0732">Signal</keyword>